<gene>
    <name type="ordered locus">SE_1299</name>
</gene>
<proteinExistence type="inferred from homology"/>
<keyword id="KW-0963">Cytoplasm</keyword>
<keyword id="KW-0378">Hydrolase</keyword>
<keyword id="KW-0540">Nuclease</keyword>
<keyword id="KW-0690">Ribosome biogenesis</keyword>
<dbReference type="EC" id="3.1.-.-" evidence="1"/>
<dbReference type="EMBL" id="AE015929">
    <property type="protein sequence ID" value="AAO04898.1"/>
    <property type="molecule type" value="Genomic_DNA"/>
</dbReference>
<dbReference type="RefSeq" id="NP_764854.1">
    <property type="nucleotide sequence ID" value="NC_004461.1"/>
</dbReference>
<dbReference type="SMR" id="Q8CSA9"/>
<dbReference type="KEGG" id="sep:SE_1299"/>
<dbReference type="PATRIC" id="fig|176280.10.peg.1268"/>
<dbReference type="eggNOG" id="COG0816">
    <property type="taxonomic scope" value="Bacteria"/>
</dbReference>
<dbReference type="HOGENOM" id="CLU_098240_2_0_9"/>
<dbReference type="OrthoDB" id="9796140at2"/>
<dbReference type="Proteomes" id="UP000001411">
    <property type="component" value="Chromosome"/>
</dbReference>
<dbReference type="GO" id="GO:0005829">
    <property type="term" value="C:cytosol"/>
    <property type="evidence" value="ECO:0007669"/>
    <property type="project" value="TreeGrafter"/>
</dbReference>
<dbReference type="GO" id="GO:0004518">
    <property type="term" value="F:nuclease activity"/>
    <property type="evidence" value="ECO:0007669"/>
    <property type="project" value="UniProtKB-KW"/>
</dbReference>
<dbReference type="GO" id="GO:0000967">
    <property type="term" value="P:rRNA 5'-end processing"/>
    <property type="evidence" value="ECO:0007669"/>
    <property type="project" value="UniProtKB-UniRule"/>
</dbReference>
<dbReference type="CDD" id="cd16964">
    <property type="entry name" value="YqgF"/>
    <property type="match status" value="1"/>
</dbReference>
<dbReference type="FunFam" id="3.30.420.140:FF:000003">
    <property type="entry name" value="Putative pre-16S rRNA nuclease"/>
    <property type="match status" value="1"/>
</dbReference>
<dbReference type="Gene3D" id="3.30.420.140">
    <property type="entry name" value="YqgF/RNase H-like domain"/>
    <property type="match status" value="1"/>
</dbReference>
<dbReference type="HAMAP" id="MF_00651">
    <property type="entry name" value="Nuclease_YqgF"/>
    <property type="match status" value="1"/>
</dbReference>
<dbReference type="InterPro" id="IPR012337">
    <property type="entry name" value="RNaseH-like_sf"/>
</dbReference>
<dbReference type="InterPro" id="IPR005227">
    <property type="entry name" value="YqgF"/>
</dbReference>
<dbReference type="InterPro" id="IPR006641">
    <property type="entry name" value="YqgF/RNaseH-like_dom"/>
</dbReference>
<dbReference type="InterPro" id="IPR037027">
    <property type="entry name" value="YqgF/RNaseH-like_dom_sf"/>
</dbReference>
<dbReference type="NCBIfam" id="TIGR00250">
    <property type="entry name" value="RNAse_H_YqgF"/>
    <property type="match status" value="1"/>
</dbReference>
<dbReference type="PANTHER" id="PTHR33317">
    <property type="entry name" value="POLYNUCLEOTIDYL TRANSFERASE, RIBONUCLEASE H-LIKE SUPERFAMILY PROTEIN"/>
    <property type="match status" value="1"/>
</dbReference>
<dbReference type="PANTHER" id="PTHR33317:SF4">
    <property type="entry name" value="POLYNUCLEOTIDYL TRANSFERASE, RIBONUCLEASE H-LIKE SUPERFAMILY PROTEIN"/>
    <property type="match status" value="1"/>
</dbReference>
<dbReference type="Pfam" id="PF03652">
    <property type="entry name" value="RuvX"/>
    <property type="match status" value="1"/>
</dbReference>
<dbReference type="SMART" id="SM00732">
    <property type="entry name" value="YqgFc"/>
    <property type="match status" value="1"/>
</dbReference>
<dbReference type="SUPFAM" id="SSF53098">
    <property type="entry name" value="Ribonuclease H-like"/>
    <property type="match status" value="1"/>
</dbReference>
<reference key="1">
    <citation type="journal article" date="2003" name="Mol. Microbiol.">
        <title>Genome-based analysis of virulence genes in a non-biofilm-forming Staphylococcus epidermidis strain (ATCC 12228).</title>
        <authorList>
            <person name="Zhang Y.-Q."/>
            <person name="Ren S.-X."/>
            <person name="Li H.-L."/>
            <person name="Wang Y.-X."/>
            <person name="Fu G."/>
            <person name="Yang J."/>
            <person name="Qin Z.-Q."/>
            <person name="Miao Y.-G."/>
            <person name="Wang W.-Y."/>
            <person name="Chen R.-S."/>
            <person name="Shen Y."/>
            <person name="Chen Z."/>
            <person name="Yuan Z.-H."/>
            <person name="Zhao G.-P."/>
            <person name="Qu D."/>
            <person name="Danchin A."/>
            <person name="Wen Y.-M."/>
        </authorList>
    </citation>
    <scope>NUCLEOTIDE SEQUENCE [LARGE SCALE GENOMIC DNA]</scope>
    <source>
        <strain>ATCC 12228 / FDA PCI 1200</strain>
    </source>
</reference>
<sequence length="142" mass="15814">MLKHKILGLDVGSKTVGIAISDLMGWTAQGLDTLRINEEQDDLGIDQLVKIIKDNQVGTVVIGLPKNMNNSIGFRGEASIKYKEKLQESIPSIDIVMWDERLSTMAAERSLLEADVSRQKRKKVIDKMAAVFILQGYLDSIQ</sequence>
<protein>
    <recommendedName>
        <fullName evidence="1">Putative pre-16S rRNA nuclease</fullName>
        <ecNumber evidence="1">3.1.-.-</ecNumber>
    </recommendedName>
</protein>
<name>YQGF_STAES</name>
<comment type="function">
    <text evidence="1">Could be a nuclease involved in processing of the 5'-end of pre-16S rRNA.</text>
</comment>
<comment type="subcellular location">
    <subcellularLocation>
        <location evidence="1">Cytoplasm</location>
    </subcellularLocation>
</comment>
<comment type="similarity">
    <text evidence="1">Belongs to the YqgF nuclease family.</text>
</comment>
<evidence type="ECO:0000255" key="1">
    <source>
        <dbReference type="HAMAP-Rule" id="MF_00651"/>
    </source>
</evidence>
<organism>
    <name type="scientific">Staphylococcus epidermidis (strain ATCC 12228 / FDA PCI 1200)</name>
    <dbReference type="NCBI Taxonomy" id="176280"/>
    <lineage>
        <taxon>Bacteria</taxon>
        <taxon>Bacillati</taxon>
        <taxon>Bacillota</taxon>
        <taxon>Bacilli</taxon>
        <taxon>Bacillales</taxon>
        <taxon>Staphylococcaceae</taxon>
        <taxon>Staphylococcus</taxon>
    </lineage>
</organism>
<feature type="chain" id="PRO_0000172143" description="Putative pre-16S rRNA nuclease">
    <location>
        <begin position="1"/>
        <end position="142"/>
    </location>
</feature>
<accession>Q8CSA9</accession>